<organism>
    <name type="scientific">Homo sapiens</name>
    <name type="common">Human</name>
    <dbReference type="NCBI Taxonomy" id="9606"/>
    <lineage>
        <taxon>Eukaryota</taxon>
        <taxon>Metazoa</taxon>
        <taxon>Chordata</taxon>
        <taxon>Craniata</taxon>
        <taxon>Vertebrata</taxon>
        <taxon>Euteleostomi</taxon>
        <taxon>Mammalia</taxon>
        <taxon>Eutheria</taxon>
        <taxon>Euarchontoglires</taxon>
        <taxon>Primates</taxon>
        <taxon>Haplorrhini</taxon>
        <taxon>Catarrhini</taxon>
        <taxon>Hominidae</taxon>
        <taxon>Homo</taxon>
    </lineage>
</organism>
<comment type="function">
    <text evidence="3 4 5">Functions as an adapter recruiting ubiquitin-protein ligases to their specific substrates (PubMed:23886940, PubMed:27462458). Through an ubiquitination-dependent mechanism plays for instance a role in the incorporation of SLC11A2 into extracellular vesicles (PubMed:27462458). More generally, plays a role in the extracellular transport of proteins between cells through the release in the extracellular space of microvesicles (PubMed:22315426). By participating in the ITCH-mediated ubiquitination and subsequent degradation of NOTCH1, negatively regulates the NOTCH signaling pathway (PubMed:23886940).</text>
</comment>
<comment type="subunit">
    <text evidence="2 3 4 5">Interacts (via PPxY motifs) with ITCH (via WW domains); the interaction is direct and participates in the recruitment of the ubiquitin-protein ligase ITCH to the NOTCH1 receptor (PubMed:21191027, PubMed:23886940). Interacts with ARRB1 and ARRB2; the interaction is direct (PubMed:23886940). Interacts with TSG101; may recruit TSG101 to the plasma membrane (PubMed:21191027, PubMed:22315426). Interacts (via PPxY motifs) with WWP2 (via WW domains); ubiquitinates ARRDC1 (PubMed:21191027, PubMed:22315426). Interacts with SLC11A2; controls the incorporation of SLC11A2 into extracellular vesicles through an ubiquitination-dependent mechanism (PubMed:27462458). Interacts with WWP1 (via WW domains) (PubMed:21191027). Interacts with NEDD4 (via WW domains) (PubMed:21191027). Interacts with PDCD6IP (PubMed:21191027).</text>
</comment>
<comment type="interaction">
    <interactant intactId="EBI-2339564">
        <id>Q8N5I2</id>
    </interactant>
    <interactant intactId="EBI-12135243">
        <id>O95208-2</id>
        <label>EPN2</label>
    </interactant>
    <organismsDiffer>false</organismsDiffer>
    <experiments>3</experiments>
</comment>
<comment type="interaction">
    <interactant intactId="EBI-2339564">
        <id>Q8N5I2</id>
    </interactant>
    <interactant intactId="EBI-1564678">
        <id>Q96J02</id>
        <label>ITCH</label>
    </interactant>
    <organismsDiffer>false</organismsDiffer>
    <experiments>5</experiments>
</comment>
<comment type="interaction">
    <interactant intactId="EBI-2339564">
        <id>Q8N5I2</id>
    </interactant>
    <interactant intactId="EBI-740929">
        <id>Q53G59</id>
        <label>KLHL12</label>
    </interactant>
    <organismsDiffer>false</organismsDiffer>
    <experiments>4</experiments>
</comment>
<comment type="interaction">
    <interactant intactId="EBI-2339564">
        <id>Q8N5I2</id>
    </interactant>
    <interactant intactId="EBI-11980301">
        <id>Q8N3F0</id>
        <label>MTURN</label>
    </interactant>
    <organismsDiffer>false</organismsDiffer>
    <experiments>3</experiments>
</comment>
<comment type="interaction">
    <interactant intactId="EBI-2339564">
        <id>Q8N5I2</id>
    </interactant>
    <interactant intactId="EBI-970214">
        <id>Q9BPX3</id>
        <label>NCAPG</label>
    </interactant>
    <organismsDiffer>false</organismsDiffer>
    <experiments>2</experiments>
</comment>
<comment type="interaction">
    <interactant intactId="EBI-2339564">
        <id>Q8N5I2</id>
    </interactant>
    <interactant intactId="EBI-7353612">
        <id>P57075-2</id>
        <label>UBASH3A</label>
    </interactant>
    <organismsDiffer>false</organismsDiffer>
    <experiments>3</experiments>
</comment>
<comment type="interaction">
    <interactant intactId="EBI-2339564">
        <id>Q8N5I2</id>
    </interactant>
    <interactant intactId="EBI-742157">
        <id>Q9H0M0</id>
        <label>WWP1</label>
    </interactant>
    <organismsDiffer>false</organismsDiffer>
    <experiments>5</experiments>
</comment>
<comment type="interaction">
    <interactant intactId="EBI-2339564">
        <id>Q8N5I2</id>
    </interactant>
    <interactant intactId="EBI-743923">
        <id>O00308</id>
        <label>WWP2</label>
    </interactant>
    <organismsDiffer>false</organismsDiffer>
    <experiments>8</experiments>
</comment>
<comment type="subcellular location">
    <subcellularLocation>
        <location evidence="3 5">Cell membrane</location>
    </subcellularLocation>
    <text evidence="3 5">Also found in extracellular vesicles different from exosomes.</text>
</comment>
<comment type="domain">
    <text evidence="3 4">The PPxY motifs mediate interaction with WW domain-containing ubiquitin-protein ligases.</text>
</comment>
<comment type="PTM">
    <text evidence="2 3">Ubiquitinated (PubMed:21191027, PubMed:22315426). Ubiquitination by WWP2; promotes localization to extracellular microvesicles (PubMed:22315426). Ubiquitinated by WWP1 (PubMed:21191027).</text>
</comment>
<comment type="similarity">
    <text evidence="7">Belongs to the arrestin family.</text>
</comment>
<evidence type="ECO:0000256" key="1">
    <source>
        <dbReference type="SAM" id="MobiDB-lite"/>
    </source>
</evidence>
<evidence type="ECO:0000269" key="2">
    <source>
    </source>
</evidence>
<evidence type="ECO:0000269" key="3">
    <source>
    </source>
</evidence>
<evidence type="ECO:0000269" key="4">
    <source>
    </source>
</evidence>
<evidence type="ECO:0000269" key="5">
    <source>
    </source>
</evidence>
<evidence type="ECO:0000303" key="6">
    <source>
    </source>
</evidence>
<evidence type="ECO:0000305" key="7"/>
<evidence type="ECO:0000312" key="8">
    <source>
        <dbReference type="HGNC" id="HGNC:28633"/>
    </source>
</evidence>
<proteinExistence type="evidence at protein level"/>
<dbReference type="EMBL" id="BC032346">
    <property type="protein sequence ID" value="AAH32346.1"/>
    <property type="molecule type" value="mRNA"/>
</dbReference>
<dbReference type="EMBL" id="AL365502">
    <property type="status" value="NOT_ANNOTATED_CDS"/>
    <property type="molecule type" value="Genomic_DNA"/>
</dbReference>
<dbReference type="CCDS" id="CCDS7049.1"/>
<dbReference type="RefSeq" id="NP_689498.1">
    <property type="nucleotide sequence ID" value="NM_152285.4"/>
</dbReference>
<dbReference type="SMR" id="Q8N5I2"/>
<dbReference type="BioGRID" id="124970">
    <property type="interactions" value="68"/>
</dbReference>
<dbReference type="FunCoup" id="Q8N5I2">
    <property type="interactions" value="288"/>
</dbReference>
<dbReference type="IntAct" id="Q8N5I2">
    <property type="interactions" value="58"/>
</dbReference>
<dbReference type="STRING" id="9606.ENSP00000360475"/>
<dbReference type="iPTMnet" id="Q8N5I2"/>
<dbReference type="PhosphoSitePlus" id="Q8N5I2"/>
<dbReference type="BioMuta" id="ARRDC1"/>
<dbReference type="DMDM" id="74751028"/>
<dbReference type="jPOST" id="Q8N5I2"/>
<dbReference type="MassIVE" id="Q8N5I2"/>
<dbReference type="PaxDb" id="9606-ENSP00000360475"/>
<dbReference type="PeptideAtlas" id="Q8N5I2"/>
<dbReference type="ProteomicsDB" id="72059"/>
<dbReference type="Pumba" id="Q8N5I2"/>
<dbReference type="Antibodypedia" id="49444">
    <property type="antibodies" value="147 antibodies from 25 providers"/>
</dbReference>
<dbReference type="DNASU" id="92714"/>
<dbReference type="Ensembl" id="ENST00000371421.9">
    <property type="protein sequence ID" value="ENSP00000360475.4"/>
    <property type="gene ID" value="ENSG00000197070.14"/>
</dbReference>
<dbReference type="GeneID" id="92714"/>
<dbReference type="KEGG" id="hsa:92714"/>
<dbReference type="MANE-Select" id="ENST00000371421.9">
    <property type="protein sequence ID" value="ENSP00000360475.4"/>
    <property type="RefSeq nucleotide sequence ID" value="NM_152285.4"/>
    <property type="RefSeq protein sequence ID" value="NP_689498.1"/>
</dbReference>
<dbReference type="UCSC" id="uc004cns.4">
    <property type="organism name" value="human"/>
</dbReference>
<dbReference type="AGR" id="HGNC:28633"/>
<dbReference type="CTD" id="92714"/>
<dbReference type="DisGeNET" id="92714"/>
<dbReference type="GeneCards" id="ARRDC1"/>
<dbReference type="HGNC" id="HGNC:28633">
    <property type="gene designation" value="ARRDC1"/>
</dbReference>
<dbReference type="HPA" id="ENSG00000197070">
    <property type="expression patterns" value="Low tissue specificity"/>
</dbReference>
<dbReference type="MIM" id="619768">
    <property type="type" value="gene"/>
</dbReference>
<dbReference type="neXtProt" id="NX_Q8N5I2"/>
<dbReference type="OpenTargets" id="ENSG00000197070"/>
<dbReference type="PharmGKB" id="PA134938267"/>
<dbReference type="VEuPathDB" id="HostDB:ENSG00000197070"/>
<dbReference type="eggNOG" id="KOG3780">
    <property type="taxonomic scope" value="Eukaryota"/>
</dbReference>
<dbReference type="GeneTree" id="ENSGT00940000159652"/>
<dbReference type="HOGENOM" id="CLU_051966_0_0_1"/>
<dbReference type="InParanoid" id="Q8N5I2"/>
<dbReference type="OMA" id="IPDIEHP"/>
<dbReference type="OrthoDB" id="7785529at2759"/>
<dbReference type="PAN-GO" id="Q8N5I2">
    <property type="GO annotations" value="4 GO annotations based on evolutionary models"/>
</dbReference>
<dbReference type="PhylomeDB" id="Q8N5I2"/>
<dbReference type="TreeFam" id="TF313650"/>
<dbReference type="PathwayCommons" id="Q8N5I2"/>
<dbReference type="SignaLink" id="Q8N5I2"/>
<dbReference type="BioGRID-ORCS" id="92714">
    <property type="hits" value="28 hits in 1154 CRISPR screens"/>
</dbReference>
<dbReference type="ChiTaRS" id="ARRDC1">
    <property type="organism name" value="human"/>
</dbReference>
<dbReference type="GenomeRNAi" id="92714"/>
<dbReference type="Pharos" id="Q8N5I2">
    <property type="development level" value="Tbio"/>
</dbReference>
<dbReference type="PRO" id="PR:Q8N5I2"/>
<dbReference type="Proteomes" id="UP000005640">
    <property type="component" value="Chromosome 9"/>
</dbReference>
<dbReference type="RNAct" id="Q8N5I2">
    <property type="molecule type" value="protein"/>
</dbReference>
<dbReference type="Bgee" id="ENSG00000197070">
    <property type="expression patterns" value="Expressed in lower esophagus mucosa and 174 other cell types or tissues"/>
</dbReference>
<dbReference type="ExpressionAtlas" id="Q8N5I2">
    <property type="expression patterns" value="baseline and differential"/>
</dbReference>
<dbReference type="GO" id="GO:0005737">
    <property type="term" value="C:cytoplasm"/>
    <property type="evidence" value="ECO:0000318"/>
    <property type="project" value="GO_Central"/>
</dbReference>
<dbReference type="GO" id="GO:0031410">
    <property type="term" value="C:cytoplasmic vesicle"/>
    <property type="evidence" value="ECO:0000314"/>
    <property type="project" value="MGI"/>
</dbReference>
<dbReference type="GO" id="GO:0070062">
    <property type="term" value="C:extracellular exosome"/>
    <property type="evidence" value="ECO:0007005"/>
    <property type="project" value="UniProtKB"/>
</dbReference>
<dbReference type="GO" id="GO:1903561">
    <property type="term" value="C:extracellular vesicle"/>
    <property type="evidence" value="ECO:0000314"/>
    <property type="project" value="UniProtKB"/>
</dbReference>
<dbReference type="GO" id="GO:0005886">
    <property type="term" value="C:plasma membrane"/>
    <property type="evidence" value="ECO:0000314"/>
    <property type="project" value="UniProtKB"/>
</dbReference>
<dbReference type="GO" id="GO:1990763">
    <property type="term" value="F:arrestin family protein binding"/>
    <property type="evidence" value="ECO:0000353"/>
    <property type="project" value="UniProtKB"/>
</dbReference>
<dbReference type="GO" id="GO:0042802">
    <property type="term" value="F:identical protein binding"/>
    <property type="evidence" value="ECO:0000353"/>
    <property type="project" value="UniProtKB"/>
</dbReference>
<dbReference type="GO" id="GO:0031625">
    <property type="term" value="F:ubiquitin protein ligase binding"/>
    <property type="evidence" value="ECO:0000353"/>
    <property type="project" value="UniProtKB"/>
</dbReference>
<dbReference type="GO" id="GO:1990756">
    <property type="term" value="F:ubiquitin-like ligase-substrate adaptor activity"/>
    <property type="evidence" value="ECO:0000315"/>
    <property type="project" value="UniProtKB"/>
</dbReference>
<dbReference type="GO" id="GO:0006858">
    <property type="term" value="P:extracellular transport"/>
    <property type="evidence" value="ECO:0000315"/>
    <property type="project" value="UniProtKB"/>
</dbReference>
<dbReference type="GO" id="GO:0140112">
    <property type="term" value="P:extracellular vesicle biogenesis"/>
    <property type="evidence" value="ECO:0000315"/>
    <property type="project" value="UniProtKB"/>
</dbReference>
<dbReference type="GO" id="GO:0045746">
    <property type="term" value="P:negative regulation of Notch signaling pathway"/>
    <property type="evidence" value="ECO:0000315"/>
    <property type="project" value="UniProtKB"/>
</dbReference>
<dbReference type="GO" id="GO:0015031">
    <property type="term" value="P:protein transport"/>
    <property type="evidence" value="ECO:0000315"/>
    <property type="project" value="UniProtKB"/>
</dbReference>
<dbReference type="GO" id="GO:0016567">
    <property type="term" value="P:protein ubiquitination"/>
    <property type="evidence" value="ECO:0000315"/>
    <property type="project" value="UniProtKB"/>
</dbReference>
<dbReference type="GO" id="GO:0006511">
    <property type="term" value="P:ubiquitin-dependent protein catabolic process"/>
    <property type="evidence" value="ECO:0000315"/>
    <property type="project" value="UniProtKB"/>
</dbReference>
<dbReference type="FunFam" id="2.60.40.640:FF:000032">
    <property type="entry name" value="Arrestin domain-containing protein 1"/>
    <property type="match status" value="1"/>
</dbReference>
<dbReference type="FunFam" id="2.60.40.640:FF:000013">
    <property type="entry name" value="Putative arrestin domain-containing protein 1"/>
    <property type="match status" value="1"/>
</dbReference>
<dbReference type="Gene3D" id="2.60.40.640">
    <property type="match status" value="2"/>
</dbReference>
<dbReference type="InterPro" id="IPR014752">
    <property type="entry name" value="Arrestin-like_C"/>
</dbReference>
<dbReference type="InterPro" id="IPR011021">
    <property type="entry name" value="Arrestin-like_N"/>
</dbReference>
<dbReference type="InterPro" id="IPR011022">
    <property type="entry name" value="Arrestin_C-like"/>
</dbReference>
<dbReference type="InterPro" id="IPR050357">
    <property type="entry name" value="Arrestin_domain-protein"/>
</dbReference>
<dbReference type="InterPro" id="IPR014756">
    <property type="entry name" value="Ig_E-set"/>
</dbReference>
<dbReference type="PANTHER" id="PTHR11188">
    <property type="entry name" value="ARRESTIN DOMAIN CONTAINING PROTEIN"/>
    <property type="match status" value="1"/>
</dbReference>
<dbReference type="PANTHER" id="PTHR11188:SF176">
    <property type="entry name" value="ARRESTIN DOMAIN-CONTAINING PROTEIN 1"/>
    <property type="match status" value="1"/>
</dbReference>
<dbReference type="Pfam" id="PF02752">
    <property type="entry name" value="Arrestin_C"/>
    <property type="match status" value="1"/>
</dbReference>
<dbReference type="Pfam" id="PF00339">
    <property type="entry name" value="Arrestin_N"/>
    <property type="match status" value="1"/>
</dbReference>
<dbReference type="SMART" id="SM01017">
    <property type="entry name" value="Arrestin_C"/>
    <property type="match status" value="2"/>
</dbReference>
<dbReference type="SUPFAM" id="SSF81296">
    <property type="entry name" value="E set domains"/>
    <property type="match status" value="2"/>
</dbReference>
<feature type="chain" id="PRO_0000244345" description="Arrestin domain-containing protein 1">
    <location>
        <begin position="1"/>
        <end position="433"/>
    </location>
</feature>
<feature type="region of interest" description="Disordered" evidence="1">
    <location>
        <begin position="296"/>
        <end position="322"/>
    </location>
</feature>
<feature type="region of interest" description="Disordered" evidence="1">
    <location>
        <begin position="349"/>
        <end position="372"/>
    </location>
</feature>
<feature type="short sequence motif" description="PPxY motif 1" evidence="4">
    <location>
        <begin position="402"/>
        <end position="405"/>
    </location>
</feature>
<feature type="short sequence motif" description="PPxY motif 2" evidence="4">
    <location>
        <begin position="415"/>
        <end position="418"/>
    </location>
</feature>
<feature type="compositionally biased region" description="Pro residues" evidence="1">
    <location>
        <begin position="301"/>
        <end position="312"/>
    </location>
</feature>
<feature type="sequence variant" id="VAR_048335" description="In dbSNP:rs35018943.">
    <original>G</original>
    <variation>C</variation>
    <location>
        <position position="363"/>
    </location>
</feature>
<feature type="mutagenesis site" description="Loss of localization to the cell membrane and extracellular vesicles. Localizes to the cytoplasm." evidence="3">
    <original>F</original>
    <variation>L</variation>
    <location>
        <position position="88"/>
    </location>
</feature>
<feature type="mutagenesis site" description="Decreased localization to the cell membrane and extracellular vesicles." evidence="3">
    <original>G</original>
    <variation>A</variation>
    <location>
        <position position="180"/>
    </location>
</feature>
<feature type="mutagenesis site" description="Decreased localization to the cell membrane and extracellular vesicles." evidence="3">
    <original>N</original>
    <variation>D</variation>
    <location>
        <position position="191"/>
    </location>
</feature>
<feature type="mutagenesis site" description="Decreased interaction with TSG101. No effect on localization to the cell membrane. Loss of localization to extracellular vesicles." evidence="3">
    <original>S</original>
    <variation>A</variation>
    <location>
        <position position="310"/>
    </location>
</feature>
<feature type="mutagenesis site" description="Loss of interaction with ITCH; when associated with A-416." evidence="4">
    <original>P</original>
    <variation>A</variation>
    <location>
        <position position="403"/>
    </location>
</feature>
<feature type="mutagenesis site" description="Loss of interaction with ITCH; when associated with A-403." evidence="4">
    <original>P</original>
    <variation>A</variation>
    <location>
        <position position="416"/>
    </location>
</feature>
<name>ARRD1_HUMAN</name>
<accession>Q8N5I2</accession>
<reference key="1">
    <citation type="journal article" date="2004" name="Nature">
        <title>DNA sequence and analysis of human chromosome 9.</title>
        <authorList>
            <person name="Humphray S.J."/>
            <person name="Oliver K."/>
            <person name="Hunt A.R."/>
            <person name="Plumb R.W."/>
            <person name="Loveland J.E."/>
            <person name="Howe K.L."/>
            <person name="Andrews T.D."/>
            <person name="Searle S."/>
            <person name="Hunt S.E."/>
            <person name="Scott C.E."/>
            <person name="Jones M.C."/>
            <person name="Ainscough R."/>
            <person name="Almeida J.P."/>
            <person name="Ambrose K.D."/>
            <person name="Ashwell R.I.S."/>
            <person name="Babbage A.K."/>
            <person name="Babbage S."/>
            <person name="Bagguley C.L."/>
            <person name="Bailey J."/>
            <person name="Banerjee R."/>
            <person name="Barker D.J."/>
            <person name="Barlow K.F."/>
            <person name="Bates K."/>
            <person name="Beasley H."/>
            <person name="Beasley O."/>
            <person name="Bird C.P."/>
            <person name="Bray-Allen S."/>
            <person name="Brown A.J."/>
            <person name="Brown J.Y."/>
            <person name="Burford D."/>
            <person name="Burrill W."/>
            <person name="Burton J."/>
            <person name="Carder C."/>
            <person name="Carter N.P."/>
            <person name="Chapman J.C."/>
            <person name="Chen Y."/>
            <person name="Clarke G."/>
            <person name="Clark S.Y."/>
            <person name="Clee C.M."/>
            <person name="Clegg S."/>
            <person name="Collier R.E."/>
            <person name="Corby N."/>
            <person name="Crosier M."/>
            <person name="Cummings A.T."/>
            <person name="Davies J."/>
            <person name="Dhami P."/>
            <person name="Dunn M."/>
            <person name="Dutta I."/>
            <person name="Dyer L.W."/>
            <person name="Earthrowl M.E."/>
            <person name="Faulkner L."/>
            <person name="Fleming C.J."/>
            <person name="Frankish A."/>
            <person name="Frankland J.A."/>
            <person name="French L."/>
            <person name="Fricker D.G."/>
            <person name="Garner P."/>
            <person name="Garnett J."/>
            <person name="Ghori J."/>
            <person name="Gilbert J.G.R."/>
            <person name="Glison C."/>
            <person name="Grafham D.V."/>
            <person name="Gribble S."/>
            <person name="Griffiths C."/>
            <person name="Griffiths-Jones S."/>
            <person name="Grocock R."/>
            <person name="Guy J."/>
            <person name="Hall R.E."/>
            <person name="Hammond S."/>
            <person name="Harley J.L."/>
            <person name="Harrison E.S.I."/>
            <person name="Hart E.A."/>
            <person name="Heath P.D."/>
            <person name="Henderson C.D."/>
            <person name="Hopkins B.L."/>
            <person name="Howard P.J."/>
            <person name="Howden P.J."/>
            <person name="Huckle E."/>
            <person name="Johnson C."/>
            <person name="Johnson D."/>
            <person name="Joy A.A."/>
            <person name="Kay M."/>
            <person name="Keenan S."/>
            <person name="Kershaw J.K."/>
            <person name="Kimberley A.M."/>
            <person name="King A."/>
            <person name="Knights A."/>
            <person name="Laird G.K."/>
            <person name="Langford C."/>
            <person name="Lawlor S."/>
            <person name="Leongamornlert D.A."/>
            <person name="Leversha M."/>
            <person name="Lloyd C."/>
            <person name="Lloyd D.M."/>
            <person name="Lovell J."/>
            <person name="Martin S."/>
            <person name="Mashreghi-Mohammadi M."/>
            <person name="Matthews L."/>
            <person name="McLaren S."/>
            <person name="McLay K.E."/>
            <person name="McMurray A."/>
            <person name="Milne S."/>
            <person name="Nickerson T."/>
            <person name="Nisbett J."/>
            <person name="Nordsiek G."/>
            <person name="Pearce A.V."/>
            <person name="Peck A.I."/>
            <person name="Porter K.M."/>
            <person name="Pandian R."/>
            <person name="Pelan S."/>
            <person name="Phillimore B."/>
            <person name="Povey S."/>
            <person name="Ramsey Y."/>
            <person name="Rand V."/>
            <person name="Scharfe M."/>
            <person name="Sehra H.K."/>
            <person name="Shownkeen R."/>
            <person name="Sims S.K."/>
            <person name="Skuce C.D."/>
            <person name="Smith M."/>
            <person name="Steward C.A."/>
            <person name="Swarbreck D."/>
            <person name="Sycamore N."/>
            <person name="Tester J."/>
            <person name="Thorpe A."/>
            <person name="Tracey A."/>
            <person name="Tromans A."/>
            <person name="Thomas D.W."/>
            <person name="Wall M."/>
            <person name="Wallis J.M."/>
            <person name="West A.P."/>
            <person name="Whitehead S.L."/>
            <person name="Willey D.L."/>
            <person name="Williams S.A."/>
            <person name="Wilming L."/>
            <person name="Wray P.W."/>
            <person name="Young L."/>
            <person name="Ashurst J.L."/>
            <person name="Coulson A."/>
            <person name="Blocker H."/>
            <person name="Durbin R.M."/>
            <person name="Sulston J.E."/>
            <person name="Hubbard T."/>
            <person name="Jackson M.J."/>
            <person name="Bentley D.R."/>
            <person name="Beck S."/>
            <person name="Rogers J."/>
            <person name="Dunham I."/>
        </authorList>
    </citation>
    <scope>NUCLEOTIDE SEQUENCE [LARGE SCALE GENOMIC DNA]</scope>
</reference>
<reference key="2">
    <citation type="journal article" date="2004" name="Genome Res.">
        <title>The status, quality, and expansion of the NIH full-length cDNA project: the Mammalian Gene Collection (MGC).</title>
        <authorList>
            <consortium name="The MGC Project Team"/>
        </authorList>
    </citation>
    <scope>NUCLEOTIDE SEQUENCE [LARGE SCALE MRNA]</scope>
    <source>
        <tissue>Blood</tissue>
    </source>
</reference>
<reference key="3">
    <citation type="journal article" date="2011" name="J. Virol.">
        <title>Multiple interactions between the ESCRT machinery and arrestin-related proteins: implications for PPXY-dependent budding.</title>
        <authorList>
            <person name="Rauch S."/>
            <person name="Martin-Serrano J."/>
        </authorList>
    </citation>
    <scope>INTERACTION WITH WWP1; WWP2; NEDD4; ITCH; TSG101 AND PDCD6IP</scope>
    <scope>UBIQUITINATION BY WWP1</scope>
</reference>
<reference key="4">
    <citation type="journal article" date="2012" name="Proc. Natl. Acad. Sci. U.S.A.">
        <title>Formation and release of arrestin domain-containing protein 1-mediated microvesicles (ARMMs) at plasma membrane by recruitment of TSG101 protein.</title>
        <authorList>
            <person name="Nabhan J.F."/>
            <person name="Hu R."/>
            <person name="Oh R.S."/>
            <person name="Cohen S.N."/>
            <person name="Lu Q."/>
        </authorList>
    </citation>
    <scope>FUNCTION</scope>
    <scope>INTERACTION WITH TSG101 AND WWP2</scope>
    <scope>SUBCELLULAR LOCATION</scope>
    <scope>UBIQUITINATION BY WWP2</scope>
    <scope>MUTAGENESIS OF PHE-88; GLY-180; ASN-191 AND SER-310</scope>
    <scope>MOTIF</scope>
</reference>
<reference key="5">
    <citation type="journal article" date="2013" name="J. Cell Sci.">
        <title>Alpha-arrestin 1 (ARRDC1) and beta-arrestins cooperate to mediate Notch degradation in mammals.</title>
        <authorList>
            <person name="Puca L."/>
            <person name="Chastagner P."/>
            <person name="Meas-Yedid V."/>
            <person name="Israel A."/>
            <person name="Brou C."/>
        </authorList>
    </citation>
    <scope>FUNCTION</scope>
    <scope>INTERACTION WITH ARRB1; ARRB2 AND ITCH</scope>
    <scope>MUTAGENESIS OF PRO-403 AND PRO-416</scope>
    <scope>MOTIF</scope>
</reference>
<reference key="6">
    <citation type="journal article" date="2014" name="J. Proteomics">
        <title>An enzyme assisted RP-RPLC approach for in-depth analysis of human liver phosphoproteome.</title>
        <authorList>
            <person name="Bian Y."/>
            <person name="Song C."/>
            <person name="Cheng K."/>
            <person name="Dong M."/>
            <person name="Wang F."/>
            <person name="Huang J."/>
            <person name="Sun D."/>
            <person name="Wang L."/>
            <person name="Ye M."/>
            <person name="Zou H."/>
        </authorList>
    </citation>
    <scope>IDENTIFICATION BY MASS SPECTROMETRY [LARGE SCALE ANALYSIS]</scope>
    <source>
        <tissue>Liver</tissue>
    </source>
</reference>
<reference key="7">
    <citation type="journal article" date="2016" name="Cell Discov.">
        <title>Regulation of the divalent metal ion transporter via membrane budding.</title>
        <authorList>
            <person name="Mackenzie K."/>
            <person name="Foot N.J."/>
            <person name="Anand S."/>
            <person name="Dalton H.E."/>
            <person name="Chaudhary N."/>
            <person name="Collins B.M."/>
            <person name="Mathivanan S."/>
            <person name="Kumar S."/>
        </authorList>
    </citation>
    <scope>FUNCTION</scope>
    <scope>INTERACTION WITH SLC11A2</scope>
    <scope>SUBCELLULAR LOCATION</scope>
</reference>
<keyword id="KW-1003">Cell membrane</keyword>
<keyword id="KW-0472">Membrane</keyword>
<keyword id="KW-1267">Proteomics identification</keyword>
<keyword id="KW-1185">Reference proteome</keyword>
<keyword id="KW-0832">Ubl conjugation</keyword>
<gene>
    <name evidence="8" type="primary">ARRDC1</name>
</gene>
<protein>
    <recommendedName>
        <fullName evidence="7">Arrestin domain-containing protein 1</fullName>
    </recommendedName>
    <alternativeName>
        <fullName evidence="6">Alpha-arrestin 1</fullName>
    </alternativeName>
</protein>
<sequence>MGRVQLFEISLSHGRVVYSPGEPLAGTVRVRLGAPLPFRAIRVTCIGSCGVSNKANDTAWVVEEGYFNSSLSLADKGSLPAGEHSFPFQFLLPATAPTSFEGPFGKIVHQVRAAIHTPRFSKDHKCSLVFYILSPLNLNSIPDIEQPNVASATKKFSYKLVKTGSVVLTASTDLRGYVVGQALQLHADVENQSGKDTSPVVASLLQKVSYKAKRWIHDVRTIAEVEGAGVKAWRRAQWHEQILVPALPQSALPGCSLIHIDYYLQVSLKAPEATVTLPVFIGNIAVNHAPVSPRPGLGLPPGAPPLVVPSAPPQEEAEAEAAAGGPHFLDPVFLSTKSHSQRQPLLATLSSVPGAPEPCPQDGSPASHPLHPPLCISTGATVPYFAEGSGGPVPTTSTLILPPEYSSWGYPYEAPPSYEQSCGGVEPSLTPES</sequence>